<reference key="1">
    <citation type="journal article" date="1998" name="J. Biol. Chem.">
        <title>Triose-phosphate isomerase (TIM) of the psychrophilic bacterium Vibrio marinus. Kinetic and structural properties.</title>
        <authorList>
            <person name="Alvarez M."/>
            <person name="Zeelen J.P."/>
            <person name="Mainfroid V."/>
            <person name="Rentier-Delrue F."/>
            <person name="Martial J.A."/>
            <person name="Wyns L."/>
            <person name="Wierenga R.K."/>
            <person name="Maes D."/>
        </authorList>
    </citation>
    <scope>NUCLEOTIDE SEQUENCE [GENOMIC DNA]</scope>
    <scope>X-RAY CRYSTALLOGRAPHY (2.7 ANGSTROMS) IN COMPLEX WITH SUBSTRATE ANALOG</scope>
    <scope>FUNCTION</scope>
    <scope>CATALYTIC ACTIVITY</scope>
    <scope>BIOPHYSICOCHEMICAL PROPERTIES</scope>
    <scope>MUTAGENESIS OF ALA-238</scope>
    <scope>SUBUNIT</scope>
    <source>
        <strain>ATCC 15382</strain>
    </source>
</reference>
<gene>
    <name evidence="1 3" type="primary">tpiA</name>
    <name type="synonym">tim</name>
    <name type="synonym">tpi</name>
</gene>
<evidence type="ECO:0000255" key="1">
    <source>
        <dbReference type="HAMAP-Rule" id="MF_00147"/>
    </source>
</evidence>
<evidence type="ECO:0000269" key="2">
    <source>
    </source>
</evidence>
<evidence type="ECO:0000303" key="3">
    <source>
    </source>
</evidence>
<evidence type="ECO:0000305" key="4">
    <source>
    </source>
</evidence>
<evidence type="ECO:0007829" key="5">
    <source>
        <dbReference type="PDB" id="1AW2"/>
    </source>
</evidence>
<keyword id="KW-0002">3D-structure</keyword>
<keyword id="KW-0963">Cytoplasm</keyword>
<keyword id="KW-0312">Gluconeogenesis</keyword>
<keyword id="KW-0324">Glycolysis</keyword>
<keyword id="KW-0413">Isomerase</keyword>
<dbReference type="EC" id="5.3.1.1" evidence="1 2"/>
<dbReference type="EMBL" id="U48935">
    <property type="protein sequence ID" value="AAA88910.1"/>
    <property type="molecule type" value="Genomic_DNA"/>
</dbReference>
<dbReference type="PDB" id="1AW1">
    <property type="method" value="X-ray"/>
    <property type="resolution" value="2.70 A"/>
    <property type="chains" value="A/B/D/E/G/H/J/K=1-256"/>
</dbReference>
<dbReference type="PDB" id="1AW2">
    <property type="method" value="X-ray"/>
    <property type="resolution" value="2.65 A"/>
    <property type="chains" value="A/B/D/E/G/H/J/K=1-256"/>
</dbReference>
<dbReference type="PDBsum" id="1AW1"/>
<dbReference type="PDBsum" id="1AW2"/>
<dbReference type="SMR" id="P50921"/>
<dbReference type="DrugBank" id="DB02726">
    <property type="generic name" value="2-Phosphoglycolic Acid"/>
</dbReference>
<dbReference type="BRENDA" id="5.3.1.1">
    <property type="organism ID" value="6633"/>
</dbReference>
<dbReference type="UniPathway" id="UPA00109">
    <property type="reaction ID" value="UER00189"/>
</dbReference>
<dbReference type="UniPathway" id="UPA00138"/>
<dbReference type="EvolutionaryTrace" id="P50921"/>
<dbReference type="GO" id="GO:0005829">
    <property type="term" value="C:cytosol"/>
    <property type="evidence" value="ECO:0007669"/>
    <property type="project" value="TreeGrafter"/>
</dbReference>
<dbReference type="GO" id="GO:0004807">
    <property type="term" value="F:triose-phosphate isomerase activity"/>
    <property type="evidence" value="ECO:0007669"/>
    <property type="project" value="UniProtKB-UniRule"/>
</dbReference>
<dbReference type="GO" id="GO:0006094">
    <property type="term" value="P:gluconeogenesis"/>
    <property type="evidence" value="ECO:0007669"/>
    <property type="project" value="UniProtKB-UniRule"/>
</dbReference>
<dbReference type="GO" id="GO:0046166">
    <property type="term" value="P:glyceraldehyde-3-phosphate biosynthetic process"/>
    <property type="evidence" value="ECO:0007669"/>
    <property type="project" value="TreeGrafter"/>
</dbReference>
<dbReference type="GO" id="GO:0019563">
    <property type="term" value="P:glycerol catabolic process"/>
    <property type="evidence" value="ECO:0007669"/>
    <property type="project" value="TreeGrafter"/>
</dbReference>
<dbReference type="GO" id="GO:0006096">
    <property type="term" value="P:glycolytic process"/>
    <property type="evidence" value="ECO:0007669"/>
    <property type="project" value="UniProtKB-UniRule"/>
</dbReference>
<dbReference type="CDD" id="cd00311">
    <property type="entry name" value="TIM"/>
    <property type="match status" value="1"/>
</dbReference>
<dbReference type="FunFam" id="3.20.20.70:FF:000020">
    <property type="entry name" value="Triosephosphate isomerase"/>
    <property type="match status" value="1"/>
</dbReference>
<dbReference type="Gene3D" id="3.20.20.70">
    <property type="entry name" value="Aldolase class I"/>
    <property type="match status" value="1"/>
</dbReference>
<dbReference type="HAMAP" id="MF_00147_B">
    <property type="entry name" value="TIM_B"/>
    <property type="match status" value="1"/>
</dbReference>
<dbReference type="InterPro" id="IPR013785">
    <property type="entry name" value="Aldolase_TIM"/>
</dbReference>
<dbReference type="InterPro" id="IPR035990">
    <property type="entry name" value="TIM_sf"/>
</dbReference>
<dbReference type="InterPro" id="IPR022896">
    <property type="entry name" value="TrioseP_Isoase_bac/euk"/>
</dbReference>
<dbReference type="InterPro" id="IPR000652">
    <property type="entry name" value="Triosephosphate_isomerase"/>
</dbReference>
<dbReference type="InterPro" id="IPR020861">
    <property type="entry name" value="Triosephosphate_isomerase_AS"/>
</dbReference>
<dbReference type="NCBIfam" id="TIGR00419">
    <property type="entry name" value="tim"/>
    <property type="match status" value="1"/>
</dbReference>
<dbReference type="PANTHER" id="PTHR21139">
    <property type="entry name" value="TRIOSEPHOSPHATE ISOMERASE"/>
    <property type="match status" value="1"/>
</dbReference>
<dbReference type="PANTHER" id="PTHR21139:SF42">
    <property type="entry name" value="TRIOSEPHOSPHATE ISOMERASE"/>
    <property type="match status" value="1"/>
</dbReference>
<dbReference type="Pfam" id="PF00121">
    <property type="entry name" value="TIM"/>
    <property type="match status" value="1"/>
</dbReference>
<dbReference type="SUPFAM" id="SSF51351">
    <property type="entry name" value="Triosephosphate isomerase (TIM)"/>
    <property type="match status" value="1"/>
</dbReference>
<dbReference type="PROSITE" id="PS00171">
    <property type="entry name" value="TIM_1"/>
    <property type="match status" value="1"/>
</dbReference>
<dbReference type="PROSITE" id="PS51440">
    <property type="entry name" value="TIM_2"/>
    <property type="match status" value="1"/>
</dbReference>
<feature type="chain" id="PRO_0000090314" description="Triosephosphate isomerase">
    <location>
        <begin position="1"/>
        <end position="256"/>
    </location>
</feature>
<feature type="active site" description="Electrophile" evidence="1 4">
    <location>
        <position position="97"/>
    </location>
</feature>
<feature type="active site" description="Proton acceptor" evidence="1">
    <location>
        <position position="169"/>
    </location>
</feature>
<feature type="binding site" evidence="1 2">
    <location>
        <begin position="9"/>
        <end position="11"/>
    </location>
    <ligand>
        <name>substrate</name>
    </ligand>
</feature>
<feature type="binding site" evidence="1 2">
    <location>
        <position position="175"/>
    </location>
    <ligand>
        <name>substrate</name>
    </ligand>
</feature>
<feature type="binding site" evidence="1 2">
    <location>
        <position position="214"/>
    </location>
    <ligand>
        <name>substrate</name>
    </ligand>
</feature>
<feature type="binding site" evidence="1 2">
    <location>
        <begin position="235"/>
        <end position="236"/>
    </location>
    <ligand>
        <name>substrate</name>
    </ligand>
</feature>
<feature type="mutagenesis site" description="Reduces catalytic efficiency and affinity, but increases thermal stability." evidence="2">
    <original>A</original>
    <variation>S</variation>
    <location>
        <position position="238"/>
    </location>
</feature>
<feature type="strand" evidence="5">
    <location>
        <begin position="5"/>
        <end position="9"/>
    </location>
</feature>
<feature type="helix" evidence="5">
    <location>
        <begin position="16"/>
        <end position="29"/>
    </location>
</feature>
<feature type="turn" evidence="5">
    <location>
        <begin position="30"/>
        <end position="32"/>
    </location>
</feature>
<feature type="strand" evidence="5">
    <location>
        <begin position="35"/>
        <end position="41"/>
    </location>
</feature>
<feature type="helix" evidence="5">
    <location>
        <begin position="44"/>
        <end position="46"/>
    </location>
</feature>
<feature type="helix" evidence="5">
    <location>
        <begin position="47"/>
        <end position="57"/>
    </location>
</feature>
<feature type="strand" evidence="5">
    <location>
        <begin position="62"/>
        <end position="66"/>
    </location>
</feature>
<feature type="strand" evidence="5">
    <location>
        <begin position="72"/>
        <end position="75"/>
    </location>
</feature>
<feature type="helix" evidence="5">
    <location>
        <begin position="82"/>
        <end position="87"/>
    </location>
</feature>
<feature type="strand" evidence="5">
    <location>
        <begin position="92"/>
        <end position="96"/>
    </location>
</feature>
<feature type="helix" evidence="5">
    <location>
        <begin position="98"/>
        <end position="103"/>
    </location>
</feature>
<feature type="helix" evidence="5">
    <location>
        <begin position="108"/>
        <end position="120"/>
    </location>
</feature>
<feature type="strand" evidence="5">
    <location>
        <begin position="124"/>
        <end position="129"/>
    </location>
</feature>
<feature type="helix" evidence="5">
    <location>
        <begin position="133"/>
        <end position="137"/>
    </location>
</feature>
<feature type="helix" evidence="5">
    <location>
        <begin position="141"/>
        <end position="156"/>
    </location>
</feature>
<feature type="helix" evidence="5">
    <location>
        <begin position="158"/>
        <end position="161"/>
    </location>
</feature>
<feature type="strand" evidence="5">
    <location>
        <begin position="165"/>
        <end position="168"/>
    </location>
</feature>
<feature type="turn" evidence="5">
    <location>
        <begin position="171"/>
        <end position="175"/>
    </location>
</feature>
<feature type="helix" evidence="5">
    <location>
        <begin position="182"/>
        <end position="197"/>
    </location>
</feature>
<feature type="helix" evidence="5">
    <location>
        <begin position="201"/>
        <end position="206"/>
    </location>
</feature>
<feature type="strand" evidence="5">
    <location>
        <begin position="208"/>
        <end position="211"/>
    </location>
</feature>
<feature type="turn" evidence="5">
    <location>
        <begin position="217"/>
        <end position="219"/>
    </location>
</feature>
<feature type="helix" evidence="5">
    <location>
        <begin position="220"/>
        <end position="223"/>
    </location>
</feature>
<feature type="strand" evidence="5">
    <location>
        <begin position="231"/>
        <end position="235"/>
    </location>
</feature>
<feature type="helix" evidence="5">
    <location>
        <begin position="236"/>
        <end position="239"/>
    </location>
</feature>
<feature type="helix" evidence="5">
    <location>
        <begin position="241"/>
        <end position="254"/>
    </location>
</feature>
<proteinExistence type="evidence at protein level"/>
<name>TPIS_MORMI</name>
<accession>P50921</accession>
<comment type="function">
    <text evidence="1 2">Involved in the gluconeogenesis. Catalyzes stereospecifically the conversion of dihydroxyacetone phosphate (DHAP) to D-glyceraldehyde-3-phosphate (G3P).</text>
</comment>
<comment type="catalytic activity">
    <reaction evidence="1 2">
        <text>D-glyceraldehyde 3-phosphate = dihydroxyacetone phosphate</text>
        <dbReference type="Rhea" id="RHEA:18585"/>
        <dbReference type="ChEBI" id="CHEBI:57642"/>
        <dbReference type="ChEBI" id="CHEBI:59776"/>
        <dbReference type="EC" id="5.3.1.1"/>
    </reaction>
</comment>
<comment type="biophysicochemical properties">
    <kinetics>
        <KM evidence="2">1.9 mM for D-glyceraldehyde 3-phosphate (at pH 7.6 and 10 degrees Celsius)</KM>
        <text evidence="2">kcat is 420000 min(-1) for isomerase activity with D-glyceraldehyde 3-phosphate as substrate (at pH 7.6 and 10 degrees Celsius).</text>
    </kinetics>
    <temperatureDependence>
        <text evidence="2">Optimum temperature is 15 degrees Celsius.</text>
    </temperatureDependence>
</comment>
<comment type="pathway">
    <text evidence="1">Carbohydrate biosynthesis; gluconeogenesis.</text>
</comment>
<comment type="pathway">
    <text evidence="1">Carbohydrate degradation; glycolysis; D-glyceraldehyde 3-phosphate from glycerone phosphate: step 1/1.</text>
</comment>
<comment type="subunit">
    <text evidence="1 2">Homodimer.</text>
</comment>
<comment type="subcellular location">
    <subcellularLocation>
        <location evidence="1">Cytoplasm</location>
    </subcellularLocation>
</comment>
<comment type="similarity">
    <text evidence="1">Belongs to the triosephosphate isomerase family.</text>
</comment>
<organism>
    <name type="scientific">Moritella marina</name>
    <name type="common">Vibrio marinus</name>
    <dbReference type="NCBI Taxonomy" id="90736"/>
    <lineage>
        <taxon>Bacteria</taxon>
        <taxon>Pseudomonadati</taxon>
        <taxon>Pseudomonadota</taxon>
        <taxon>Gammaproteobacteria</taxon>
        <taxon>Alteromonadales</taxon>
        <taxon>Moritellaceae</taxon>
        <taxon>Moritella</taxon>
    </lineage>
</organism>
<sequence>MRHPVVMGNWKLNGSKEMVVDLLNGLNAELEGVTGVDVAVAPPALFVDLAERTLTEAGSAIILGAQNTDLNNSGAFTGDMSPAMLKEFGATHIIIGHSERREYHAESDEFVAKKFAFLKENGLTPVLCIGESDAQNEAGETMAVCARQLDAVINTQGVEALEGAIIAYEPIWAIGTGKAATAEDAQRIHAQIRAHIAEKSEAVAKNVVIQYGGSVKPENAAAYFAQPDIDGALVGGAALDAKSFAAIAKAAAEAKA</sequence>
<protein>
    <recommendedName>
        <fullName evidence="1 3">Triosephosphate isomerase</fullName>
        <shortName evidence="1 3">TIM</shortName>
        <shortName evidence="1 3">TPI</shortName>
        <ecNumber evidence="1 2">5.3.1.1</ecNumber>
    </recommendedName>
    <alternativeName>
        <fullName evidence="1 3">Triose-phosphate isomerase</fullName>
    </alternativeName>
</protein>